<gene>
    <name type="primary">RHO</name>
    <name type="synonym">RH1</name>
</gene>
<sequence length="348" mass="38921">MNGTEGPNFYVPFSNKTGVVRSPFEEPQYYLAEPWQFSCLAAYMFMLIVLGFPINFLTLYVTIQHKKLRTPLNYILLNLAIADLFMVFGGFTTTLYTSLHGYFVFGPTGCDLEGFFATLGGEIALWSLVVLAIERYIVVCKPMSNFRFGENHAIMGVAFTWVMALACAAPPLVGWSRYIPEGMQCSCGIDYYTLKPEVNNESFVIYMFVVHFTIPMVVIFFCYGQLVFTVKEAAAQQQESATTQKAEKEVTRMVIIMVIAFLICWLPYAGVAFYIFTHQGSNFGPILMTLPAFFAKTSAVYNPVIYIMLNKQFRTCMLTTLCCGKIPLGDDEASATASKTETSQVAPA</sequence>
<feature type="chain" id="PRO_0000227017" description="Rhodopsin">
    <location>
        <begin position="1"/>
        <end position="348"/>
    </location>
</feature>
<feature type="topological domain" description="Extracellular" evidence="6">
    <location>
        <begin position="1"/>
        <end position="36"/>
    </location>
</feature>
<feature type="transmembrane region" description="Helical; Name=1" evidence="1">
    <location>
        <begin position="37"/>
        <end position="61"/>
    </location>
</feature>
<feature type="topological domain" description="Cytoplasmic" evidence="6">
    <location>
        <begin position="62"/>
        <end position="73"/>
    </location>
</feature>
<feature type="transmembrane region" description="Helical; Name=2" evidence="1">
    <location>
        <begin position="74"/>
        <end position="96"/>
    </location>
</feature>
<feature type="topological domain" description="Extracellular" evidence="6">
    <location>
        <begin position="97"/>
        <end position="110"/>
    </location>
</feature>
<feature type="transmembrane region" description="Helical; Name=3" evidence="1">
    <location>
        <begin position="111"/>
        <end position="133"/>
    </location>
</feature>
<feature type="topological domain" description="Cytoplasmic" evidence="6">
    <location>
        <begin position="134"/>
        <end position="152"/>
    </location>
</feature>
<feature type="transmembrane region" description="Helical; Name=4" evidence="1">
    <location>
        <begin position="153"/>
        <end position="173"/>
    </location>
</feature>
<feature type="topological domain" description="Extracellular" evidence="6">
    <location>
        <begin position="174"/>
        <end position="202"/>
    </location>
</feature>
<feature type="transmembrane region" description="Helical; Name=5" evidence="1">
    <location>
        <begin position="203"/>
        <end position="224"/>
    </location>
</feature>
<feature type="topological domain" description="Cytoplasmic" evidence="6">
    <location>
        <begin position="225"/>
        <end position="252"/>
    </location>
</feature>
<feature type="transmembrane region" description="Helical; Name=6" evidence="1">
    <location>
        <begin position="253"/>
        <end position="274"/>
    </location>
</feature>
<feature type="topological domain" description="Extracellular" evidence="6">
    <location>
        <begin position="275"/>
        <end position="286"/>
    </location>
</feature>
<feature type="transmembrane region" description="Helical; Name=7" evidence="1">
    <location>
        <begin position="287"/>
        <end position="308"/>
    </location>
</feature>
<feature type="topological domain" description="Cytoplasmic" evidence="6">
    <location>
        <begin position="309"/>
        <end position="348"/>
    </location>
</feature>
<feature type="region of interest" description="Interaction with SAG" evidence="1">
    <location>
        <begin position="330"/>
        <end position="348"/>
    </location>
</feature>
<feature type="short sequence motif" description="'Ionic lock' involved in activated form stabilization" evidence="1">
    <location>
        <begin position="134"/>
        <end position="136"/>
    </location>
</feature>
<feature type="binding site" evidence="1">
    <location>
        <position position="201"/>
    </location>
    <ligand>
        <name>Zn(2+)</name>
        <dbReference type="ChEBI" id="CHEBI:29105"/>
    </ligand>
</feature>
<feature type="binding site" evidence="1">
    <location>
        <position position="279"/>
    </location>
    <ligand>
        <name>Zn(2+)</name>
        <dbReference type="ChEBI" id="CHEBI:29105"/>
    </ligand>
</feature>
<feature type="site" description="Plays an important role in the conformation switch to the active conformation" evidence="1">
    <location>
        <position position="113"/>
    </location>
</feature>
<feature type="modified residue" description="N-acetylmethionine" evidence="1">
    <location>
        <position position="1"/>
    </location>
</feature>
<feature type="modified residue" description="N6-(retinylidene)lysine" evidence="1">
    <location>
        <position position="296"/>
    </location>
</feature>
<feature type="modified residue" description="Phosphoserine" evidence="2">
    <location>
        <position position="334"/>
    </location>
</feature>
<feature type="modified residue" description="Phosphothreonine" evidence="2">
    <location>
        <position position="336"/>
    </location>
</feature>
<feature type="modified residue" description="Phosphoserine" evidence="2">
    <location>
        <position position="338"/>
    </location>
</feature>
<feature type="modified residue" description="Phosphothreonine" evidence="1">
    <location>
        <position position="340"/>
    </location>
</feature>
<feature type="modified residue" description="Phosphothreonine" evidence="1">
    <location>
        <position position="342"/>
    </location>
</feature>
<feature type="modified residue" description="Phosphoserine" evidence="1">
    <location>
        <position position="343"/>
    </location>
</feature>
<feature type="lipid moiety-binding region" description="S-palmitoyl cysteine" evidence="1">
    <location>
        <position position="322"/>
    </location>
</feature>
<feature type="lipid moiety-binding region" description="S-palmitoyl cysteine" evidence="1">
    <location>
        <position position="323"/>
    </location>
</feature>
<feature type="glycosylation site" description="N-linked (GlcNAc...) asparagine" evidence="4">
    <location>
        <position position="2"/>
    </location>
</feature>
<feature type="glycosylation site" description="N-linked (GlcNAc...) asparagine" evidence="4">
    <location>
        <position position="15"/>
    </location>
</feature>
<feature type="disulfide bond" evidence="5">
    <location>
        <begin position="110"/>
        <end position="187"/>
    </location>
</feature>
<name>OPSD_CALPD</name>
<reference key="1">
    <citation type="journal article" date="2003" name="Gene">
        <title>The rod opsin pigments from two marsupial species, the South American bare-tailed woolly opossum and the Australian fat-tailed dunnart.</title>
        <authorList>
            <person name="Hunt D.M."/>
            <person name="Arrese C.A."/>
            <person name="von Dornum M."/>
            <person name="Rodger J."/>
            <person name="Oddy A."/>
            <person name="Cowing J.A."/>
            <person name="Ager E.I."/>
            <person name="Bowmaker J.K."/>
            <person name="Beazley L.D."/>
            <person name="Shand J."/>
        </authorList>
    </citation>
    <scope>NUCLEOTIDE SEQUENCE [MRNA]</scope>
</reference>
<keyword id="KW-0007">Acetylation</keyword>
<keyword id="KW-0966">Cell projection</keyword>
<keyword id="KW-0157">Chromophore</keyword>
<keyword id="KW-1015">Disulfide bond</keyword>
<keyword id="KW-0297">G-protein coupled receptor</keyword>
<keyword id="KW-0325">Glycoprotein</keyword>
<keyword id="KW-0449">Lipoprotein</keyword>
<keyword id="KW-0472">Membrane</keyword>
<keyword id="KW-0479">Metal-binding</keyword>
<keyword id="KW-0564">Palmitate</keyword>
<keyword id="KW-0597">Phosphoprotein</keyword>
<keyword id="KW-0600">Photoreceptor protein</keyword>
<keyword id="KW-0675">Receptor</keyword>
<keyword id="KW-0681">Retinal protein</keyword>
<keyword id="KW-0716">Sensory transduction</keyword>
<keyword id="KW-0807">Transducer</keyword>
<keyword id="KW-0812">Transmembrane</keyword>
<keyword id="KW-1133">Transmembrane helix</keyword>
<keyword id="KW-0844">Vision</keyword>
<keyword id="KW-0862">Zinc</keyword>
<comment type="function">
    <text evidence="1 3">Photoreceptor required for image-forming vision at low light intensity. Required for photoreceptor cell viability after birth (By similarity). Light-induced isomerization of 11-cis to all-trans retinal triggers a conformational change that activates signaling via G-proteins. Subsequent receptor phosphorylation mediates displacement of the bound G-protein alpha subunit by the arrestin SAG and terminates signaling (By similarity).</text>
</comment>
<comment type="subunit">
    <text evidence="1 3">Homodimer (By similarity). May form a complex composed of RHO, GRK1 and RCVRN in a Ca(2+)-dependent manner; RCVRN prevents the interaction between GRK1 and RHO (By similarity). Interacts with GRK1 (By similarity). Interacts (phosphorylated form) with SAG. Interacts with GNAT1. Interacts with GNAT3. SAG and G-proteins compete for a common binding site (By similarity). Interacts with PRCD; the interaction promotes PRCD stability. Forms a complex with ASAP1 and ARF4. Forms a complex with ASAP1, RAB11A, Rabin8/RAB3IP, ARF4 and RAB11FIP3; the complex regulates Golgi-to-cilia rhodopsin/RHO transport in photoreceptors (By similarity).</text>
</comment>
<comment type="subcellular location">
    <subcellularLocation>
        <location evidence="1">Membrane</location>
        <topology evidence="1">Multi-pass membrane protein</topology>
    </subcellularLocation>
    <subcellularLocation>
        <location evidence="1">Cell projection</location>
        <location evidence="1">Cilium</location>
        <location evidence="1">Photoreceptor outer segment</location>
    </subcellularLocation>
    <text evidence="3">Synthesized in the inner segment (IS) of rod photoreceptor cells before vectorial transport to disk membranes in the rod outer segment (OS) photosensory cilia.</text>
</comment>
<comment type="PTM">
    <text evidence="1">Phosphorylated on some or all of the serine and threonine residues present in the C-terminal region.</text>
</comment>
<comment type="PTM">
    <text evidence="1">Contains one covalently linked retinal chromophore. Upon light absorption, the covalently bound 11-cis-retinal is converted to all-trans-retinal. After hydrolysis of the Schiff base and release of the covalently bound all-trans-retinal, active rhodopsin is regenerated by binding of a fresh molecule of 11-cis-retinal.</text>
</comment>
<comment type="similarity">
    <text evidence="5">Belongs to the G-protein coupled receptor 1 family. Opsin subfamily.</text>
</comment>
<accession>Q6W3E1</accession>
<protein>
    <recommendedName>
        <fullName>Rhodopsin</fullName>
    </recommendedName>
</protein>
<dbReference type="EMBL" id="AY313946">
    <property type="protein sequence ID" value="AAQ82903.1"/>
    <property type="molecule type" value="mRNA"/>
</dbReference>
<dbReference type="SMR" id="Q6W3E1"/>
<dbReference type="GlyCosmos" id="Q6W3E1">
    <property type="glycosylation" value="2 sites, No reported glycans"/>
</dbReference>
<dbReference type="GO" id="GO:0016020">
    <property type="term" value="C:membrane"/>
    <property type="evidence" value="ECO:0000250"/>
    <property type="project" value="UniProtKB"/>
</dbReference>
<dbReference type="GO" id="GO:0097381">
    <property type="term" value="C:photoreceptor disc membrane"/>
    <property type="evidence" value="ECO:0000250"/>
    <property type="project" value="UniProtKB"/>
</dbReference>
<dbReference type="GO" id="GO:0060342">
    <property type="term" value="C:photoreceptor inner segment membrane"/>
    <property type="evidence" value="ECO:0000250"/>
    <property type="project" value="UniProtKB"/>
</dbReference>
<dbReference type="GO" id="GO:0042622">
    <property type="term" value="C:photoreceptor outer segment membrane"/>
    <property type="evidence" value="ECO:0000250"/>
    <property type="project" value="UniProtKB"/>
</dbReference>
<dbReference type="GO" id="GO:0005886">
    <property type="term" value="C:plasma membrane"/>
    <property type="evidence" value="ECO:0000250"/>
    <property type="project" value="UniProtKB"/>
</dbReference>
<dbReference type="GO" id="GO:0005502">
    <property type="term" value="F:11-cis retinal binding"/>
    <property type="evidence" value="ECO:0000250"/>
    <property type="project" value="UniProtKB"/>
</dbReference>
<dbReference type="GO" id="GO:0008020">
    <property type="term" value="F:G protein-coupled photoreceptor activity"/>
    <property type="evidence" value="ECO:0000250"/>
    <property type="project" value="UniProtKB"/>
</dbReference>
<dbReference type="GO" id="GO:0046872">
    <property type="term" value="F:metal ion binding"/>
    <property type="evidence" value="ECO:0007669"/>
    <property type="project" value="UniProtKB-KW"/>
</dbReference>
<dbReference type="GO" id="GO:0016038">
    <property type="term" value="P:absorption of visible light"/>
    <property type="evidence" value="ECO:0000250"/>
    <property type="project" value="AgBase"/>
</dbReference>
<dbReference type="GO" id="GO:0016056">
    <property type="term" value="P:G protein-coupled opsin signaling pathway"/>
    <property type="evidence" value="ECO:0000250"/>
    <property type="project" value="UniProtKB"/>
</dbReference>
<dbReference type="GO" id="GO:0007186">
    <property type="term" value="P:G protein-coupled receptor signaling pathway"/>
    <property type="evidence" value="ECO:0000250"/>
    <property type="project" value="UniProtKB"/>
</dbReference>
<dbReference type="GO" id="GO:0007601">
    <property type="term" value="P:visual perception"/>
    <property type="evidence" value="ECO:0007669"/>
    <property type="project" value="UniProtKB-KW"/>
</dbReference>
<dbReference type="CDD" id="cd15080">
    <property type="entry name" value="7tmA_MWS_opsin"/>
    <property type="match status" value="1"/>
</dbReference>
<dbReference type="FunFam" id="1.20.1070.10:FF:000018">
    <property type="entry name" value="Rhodopsin"/>
    <property type="match status" value="1"/>
</dbReference>
<dbReference type="Gene3D" id="1.20.1070.10">
    <property type="entry name" value="Rhodopsin 7-helix transmembrane proteins"/>
    <property type="match status" value="1"/>
</dbReference>
<dbReference type="InterPro" id="IPR050125">
    <property type="entry name" value="GPCR_opsins"/>
</dbReference>
<dbReference type="InterPro" id="IPR000276">
    <property type="entry name" value="GPCR_Rhodpsn"/>
</dbReference>
<dbReference type="InterPro" id="IPR017452">
    <property type="entry name" value="GPCR_Rhodpsn_7TM"/>
</dbReference>
<dbReference type="InterPro" id="IPR001760">
    <property type="entry name" value="Opsin"/>
</dbReference>
<dbReference type="InterPro" id="IPR027430">
    <property type="entry name" value="Retinal_BS"/>
</dbReference>
<dbReference type="InterPro" id="IPR000732">
    <property type="entry name" value="Rhodopsin"/>
</dbReference>
<dbReference type="InterPro" id="IPR019477">
    <property type="entry name" value="Rhodopsin_N"/>
</dbReference>
<dbReference type="PANTHER" id="PTHR24240">
    <property type="entry name" value="OPSIN"/>
    <property type="match status" value="1"/>
</dbReference>
<dbReference type="Pfam" id="PF00001">
    <property type="entry name" value="7tm_1"/>
    <property type="match status" value="1"/>
</dbReference>
<dbReference type="Pfam" id="PF10413">
    <property type="entry name" value="Rhodopsin_N"/>
    <property type="match status" value="1"/>
</dbReference>
<dbReference type="PRINTS" id="PR00237">
    <property type="entry name" value="GPCRRHODOPSN"/>
</dbReference>
<dbReference type="PRINTS" id="PR00238">
    <property type="entry name" value="OPSIN"/>
</dbReference>
<dbReference type="PRINTS" id="PR00579">
    <property type="entry name" value="RHODOPSIN"/>
</dbReference>
<dbReference type="SMART" id="SM01381">
    <property type="entry name" value="7TM_GPCR_Srsx"/>
    <property type="match status" value="1"/>
</dbReference>
<dbReference type="SUPFAM" id="SSF81321">
    <property type="entry name" value="Family A G protein-coupled receptor-like"/>
    <property type="match status" value="1"/>
</dbReference>
<dbReference type="PROSITE" id="PS00237">
    <property type="entry name" value="G_PROTEIN_RECEP_F1_1"/>
    <property type="match status" value="1"/>
</dbReference>
<dbReference type="PROSITE" id="PS50262">
    <property type="entry name" value="G_PROTEIN_RECEP_F1_2"/>
    <property type="match status" value="1"/>
</dbReference>
<dbReference type="PROSITE" id="PS00238">
    <property type="entry name" value="OPSIN"/>
    <property type="match status" value="1"/>
</dbReference>
<organism>
    <name type="scientific">Caluromys philander</name>
    <name type="common">Bare-tailed woolly opossum</name>
    <dbReference type="NCBI Taxonomy" id="70610"/>
    <lineage>
        <taxon>Eukaryota</taxon>
        <taxon>Metazoa</taxon>
        <taxon>Chordata</taxon>
        <taxon>Craniata</taxon>
        <taxon>Vertebrata</taxon>
        <taxon>Euteleostomi</taxon>
        <taxon>Mammalia</taxon>
        <taxon>Metatheria</taxon>
        <taxon>Didelphimorphia</taxon>
        <taxon>Didelphidae</taxon>
        <taxon>Caluromys</taxon>
    </lineage>
</organism>
<proteinExistence type="evidence at transcript level"/>
<evidence type="ECO:0000250" key="1">
    <source>
        <dbReference type="UniProtKB" id="P02699"/>
    </source>
</evidence>
<evidence type="ECO:0000250" key="2">
    <source>
        <dbReference type="UniProtKB" id="P02700"/>
    </source>
</evidence>
<evidence type="ECO:0000250" key="3">
    <source>
        <dbReference type="UniProtKB" id="P08100"/>
    </source>
</evidence>
<evidence type="ECO:0000255" key="4"/>
<evidence type="ECO:0000255" key="5">
    <source>
        <dbReference type="PROSITE-ProRule" id="PRU00521"/>
    </source>
</evidence>
<evidence type="ECO:0000305" key="6"/>